<gene>
    <name evidence="1" type="primary">ybeY</name>
    <name type="ordered locus">AAur_2230</name>
</gene>
<feature type="chain" id="PRO_1000000711" description="Endoribonuclease YbeY">
    <location>
        <begin position="1"/>
        <end position="157"/>
    </location>
</feature>
<feature type="binding site" evidence="1">
    <location>
        <position position="116"/>
    </location>
    <ligand>
        <name>Zn(2+)</name>
        <dbReference type="ChEBI" id="CHEBI:29105"/>
        <note>catalytic</note>
    </ligand>
</feature>
<feature type="binding site" evidence="1">
    <location>
        <position position="120"/>
    </location>
    <ligand>
        <name>Zn(2+)</name>
        <dbReference type="ChEBI" id="CHEBI:29105"/>
        <note>catalytic</note>
    </ligand>
</feature>
<feature type="binding site" evidence="1">
    <location>
        <position position="126"/>
    </location>
    <ligand>
        <name>Zn(2+)</name>
        <dbReference type="ChEBI" id="CHEBI:29105"/>
        <note>catalytic</note>
    </ligand>
</feature>
<dbReference type="EC" id="3.1.-.-" evidence="1"/>
<dbReference type="EMBL" id="CP000474">
    <property type="protein sequence ID" value="ABM06327.1"/>
    <property type="molecule type" value="Genomic_DNA"/>
</dbReference>
<dbReference type="RefSeq" id="WP_011774915.1">
    <property type="nucleotide sequence ID" value="NC_008711.1"/>
</dbReference>
<dbReference type="SMR" id="A1R6V9"/>
<dbReference type="STRING" id="290340.AAur_2230"/>
<dbReference type="KEGG" id="aau:AAur_2230"/>
<dbReference type="eggNOG" id="COG0319">
    <property type="taxonomic scope" value="Bacteria"/>
</dbReference>
<dbReference type="HOGENOM" id="CLU_106710_3_2_11"/>
<dbReference type="OrthoDB" id="9807740at2"/>
<dbReference type="Proteomes" id="UP000000637">
    <property type="component" value="Chromosome"/>
</dbReference>
<dbReference type="GO" id="GO:0005737">
    <property type="term" value="C:cytoplasm"/>
    <property type="evidence" value="ECO:0007669"/>
    <property type="project" value="UniProtKB-SubCell"/>
</dbReference>
<dbReference type="GO" id="GO:0004222">
    <property type="term" value="F:metalloendopeptidase activity"/>
    <property type="evidence" value="ECO:0007669"/>
    <property type="project" value="InterPro"/>
</dbReference>
<dbReference type="GO" id="GO:0004521">
    <property type="term" value="F:RNA endonuclease activity"/>
    <property type="evidence" value="ECO:0007669"/>
    <property type="project" value="UniProtKB-UniRule"/>
</dbReference>
<dbReference type="GO" id="GO:0008270">
    <property type="term" value="F:zinc ion binding"/>
    <property type="evidence" value="ECO:0007669"/>
    <property type="project" value="UniProtKB-UniRule"/>
</dbReference>
<dbReference type="GO" id="GO:0006364">
    <property type="term" value="P:rRNA processing"/>
    <property type="evidence" value="ECO:0007669"/>
    <property type="project" value="UniProtKB-UniRule"/>
</dbReference>
<dbReference type="Gene3D" id="3.40.390.30">
    <property type="entry name" value="Metalloproteases ('zincins'), catalytic domain"/>
    <property type="match status" value="1"/>
</dbReference>
<dbReference type="HAMAP" id="MF_00009">
    <property type="entry name" value="Endoribonucl_YbeY"/>
    <property type="match status" value="1"/>
</dbReference>
<dbReference type="InterPro" id="IPR023091">
    <property type="entry name" value="MetalPrtase_cat_dom_sf_prd"/>
</dbReference>
<dbReference type="InterPro" id="IPR002036">
    <property type="entry name" value="YbeY"/>
</dbReference>
<dbReference type="InterPro" id="IPR020549">
    <property type="entry name" value="YbeY_CS"/>
</dbReference>
<dbReference type="NCBIfam" id="TIGR00043">
    <property type="entry name" value="rRNA maturation RNase YbeY"/>
    <property type="match status" value="1"/>
</dbReference>
<dbReference type="PANTHER" id="PTHR46986">
    <property type="entry name" value="ENDORIBONUCLEASE YBEY, CHLOROPLASTIC"/>
    <property type="match status" value="1"/>
</dbReference>
<dbReference type="PANTHER" id="PTHR46986:SF1">
    <property type="entry name" value="ENDORIBONUCLEASE YBEY, CHLOROPLASTIC"/>
    <property type="match status" value="1"/>
</dbReference>
<dbReference type="Pfam" id="PF02130">
    <property type="entry name" value="YbeY"/>
    <property type="match status" value="1"/>
</dbReference>
<dbReference type="SUPFAM" id="SSF55486">
    <property type="entry name" value="Metalloproteases ('zincins'), catalytic domain"/>
    <property type="match status" value="1"/>
</dbReference>
<dbReference type="PROSITE" id="PS01306">
    <property type="entry name" value="UPF0054"/>
    <property type="match status" value="1"/>
</dbReference>
<protein>
    <recommendedName>
        <fullName evidence="1">Endoribonuclease YbeY</fullName>
        <ecNumber evidence="1">3.1.-.-</ecNumber>
    </recommendedName>
</protein>
<proteinExistence type="inferred from homology"/>
<sequence length="157" mass="17428">MSIEVNNESGVVVDEAQLVTLSRFIFERLYIHPQAELSILLVDEPAMEKLHIELMDEPGATDVLSVPMDELTPGTPEKPTPQGMLGDIAICPQVAEVQARNAGHPTQDEMLLLTTHGILHLLGFDHAEPEEKEEMFGLQRELLSEFLGKDAPMETMQ</sequence>
<evidence type="ECO:0000255" key="1">
    <source>
        <dbReference type="HAMAP-Rule" id="MF_00009"/>
    </source>
</evidence>
<organism>
    <name type="scientific">Paenarthrobacter aurescens (strain TC1)</name>
    <dbReference type="NCBI Taxonomy" id="290340"/>
    <lineage>
        <taxon>Bacteria</taxon>
        <taxon>Bacillati</taxon>
        <taxon>Actinomycetota</taxon>
        <taxon>Actinomycetes</taxon>
        <taxon>Micrococcales</taxon>
        <taxon>Micrococcaceae</taxon>
        <taxon>Paenarthrobacter</taxon>
    </lineage>
</organism>
<reference key="1">
    <citation type="journal article" date="2006" name="PLoS Genet.">
        <title>Secrets of soil survival revealed by the genome sequence of Arthrobacter aurescens TC1.</title>
        <authorList>
            <person name="Mongodin E.F."/>
            <person name="Shapir N."/>
            <person name="Daugherty S.C."/>
            <person name="DeBoy R.T."/>
            <person name="Emerson J.B."/>
            <person name="Shvartzbeyn A."/>
            <person name="Radune D."/>
            <person name="Vamathevan J."/>
            <person name="Riggs F."/>
            <person name="Grinberg V."/>
            <person name="Khouri H.M."/>
            <person name="Wackett L.P."/>
            <person name="Nelson K.E."/>
            <person name="Sadowsky M.J."/>
        </authorList>
    </citation>
    <scope>NUCLEOTIDE SEQUENCE [LARGE SCALE GENOMIC DNA]</scope>
    <source>
        <strain>TC1</strain>
    </source>
</reference>
<keyword id="KW-0963">Cytoplasm</keyword>
<keyword id="KW-0255">Endonuclease</keyword>
<keyword id="KW-0378">Hydrolase</keyword>
<keyword id="KW-0479">Metal-binding</keyword>
<keyword id="KW-0540">Nuclease</keyword>
<keyword id="KW-0690">Ribosome biogenesis</keyword>
<keyword id="KW-0698">rRNA processing</keyword>
<keyword id="KW-0862">Zinc</keyword>
<accession>A1R6V9</accession>
<name>YBEY_PAEAT</name>
<comment type="function">
    <text evidence="1">Single strand-specific metallo-endoribonuclease involved in late-stage 70S ribosome quality control and in maturation of the 3' terminus of the 16S rRNA.</text>
</comment>
<comment type="cofactor">
    <cofactor evidence="1">
        <name>Zn(2+)</name>
        <dbReference type="ChEBI" id="CHEBI:29105"/>
    </cofactor>
    <text evidence="1">Binds 1 zinc ion.</text>
</comment>
<comment type="subcellular location">
    <subcellularLocation>
        <location evidence="1">Cytoplasm</location>
    </subcellularLocation>
</comment>
<comment type="similarity">
    <text evidence="1">Belongs to the endoribonuclease YbeY family.</text>
</comment>